<name>Y3920_AERHH</name>
<comment type="function">
    <text evidence="1">Displays ATPase and GTPase activities.</text>
</comment>
<comment type="similarity">
    <text evidence="1">Belongs to the RapZ-like family.</text>
</comment>
<sequence length="288" mass="32521">MQLIVVSGRSGSGKTVALRVLEDLGYYCVDNLPVNLLPQLIVSVESQYDKLAVSIDVRNLPASPDKLETLLAQVRNEGRVEFSSFFFDAENSTLLKRYGESRRLHPLSRNQLSLDEAIREETHLLAPLSSTADLRIDTTNLSIHDLSELIKTRVLGKKENELVLVFESFGFKYGIPKDADFVFDARFLPNPHWIPELKPFTGKDEPVARYLSSQPDVMQFILQIENMLATWLPHLERNNRSYVTVGIGCTGGQHRSVFIAEQLAGAFRLLGKNVQIRHRTLDKSAPQF</sequence>
<proteinExistence type="inferred from homology"/>
<keyword id="KW-0067">ATP-binding</keyword>
<keyword id="KW-0342">GTP-binding</keyword>
<keyword id="KW-0547">Nucleotide-binding</keyword>
<keyword id="KW-1185">Reference proteome</keyword>
<dbReference type="EMBL" id="CP000462">
    <property type="protein sequence ID" value="ABK37187.1"/>
    <property type="molecule type" value="Genomic_DNA"/>
</dbReference>
<dbReference type="RefSeq" id="YP_858359.1">
    <property type="nucleotide sequence ID" value="NC_008570.1"/>
</dbReference>
<dbReference type="SMR" id="A0KQ08"/>
<dbReference type="STRING" id="380703.AHA_3920"/>
<dbReference type="EnsemblBacteria" id="ABK37187">
    <property type="protein sequence ID" value="ABK37187"/>
    <property type="gene ID" value="AHA_3920"/>
</dbReference>
<dbReference type="GeneID" id="4486779"/>
<dbReference type="KEGG" id="aha:AHA_3920"/>
<dbReference type="PATRIC" id="fig|380703.7.peg.3890"/>
<dbReference type="eggNOG" id="COG1660">
    <property type="taxonomic scope" value="Bacteria"/>
</dbReference>
<dbReference type="HOGENOM" id="CLU_059558_1_1_6"/>
<dbReference type="OrthoDB" id="9784461at2"/>
<dbReference type="Proteomes" id="UP000000756">
    <property type="component" value="Chromosome"/>
</dbReference>
<dbReference type="GO" id="GO:0005524">
    <property type="term" value="F:ATP binding"/>
    <property type="evidence" value="ECO:0007669"/>
    <property type="project" value="UniProtKB-UniRule"/>
</dbReference>
<dbReference type="GO" id="GO:0005525">
    <property type="term" value="F:GTP binding"/>
    <property type="evidence" value="ECO:0007669"/>
    <property type="project" value="UniProtKB-UniRule"/>
</dbReference>
<dbReference type="Gene3D" id="3.40.50.300">
    <property type="entry name" value="P-loop containing nucleotide triphosphate hydrolases"/>
    <property type="match status" value="1"/>
</dbReference>
<dbReference type="HAMAP" id="MF_00636">
    <property type="entry name" value="RapZ_like"/>
    <property type="match status" value="1"/>
</dbReference>
<dbReference type="InterPro" id="IPR027417">
    <property type="entry name" value="P-loop_NTPase"/>
</dbReference>
<dbReference type="InterPro" id="IPR005337">
    <property type="entry name" value="RapZ-like"/>
</dbReference>
<dbReference type="InterPro" id="IPR053930">
    <property type="entry name" value="RapZ-like_N"/>
</dbReference>
<dbReference type="InterPro" id="IPR053931">
    <property type="entry name" value="RapZ_C"/>
</dbReference>
<dbReference type="NCBIfam" id="NF003828">
    <property type="entry name" value="PRK05416.1"/>
    <property type="match status" value="1"/>
</dbReference>
<dbReference type="PANTHER" id="PTHR30448">
    <property type="entry name" value="RNASE ADAPTER PROTEIN RAPZ"/>
    <property type="match status" value="1"/>
</dbReference>
<dbReference type="PANTHER" id="PTHR30448:SF0">
    <property type="entry name" value="RNASE ADAPTER PROTEIN RAPZ"/>
    <property type="match status" value="1"/>
</dbReference>
<dbReference type="Pfam" id="PF22740">
    <property type="entry name" value="PapZ_C"/>
    <property type="match status" value="1"/>
</dbReference>
<dbReference type="Pfam" id="PF03668">
    <property type="entry name" value="RapZ-like_N"/>
    <property type="match status" value="1"/>
</dbReference>
<dbReference type="PIRSF" id="PIRSF005052">
    <property type="entry name" value="P-loopkin"/>
    <property type="match status" value="1"/>
</dbReference>
<dbReference type="SUPFAM" id="SSF52540">
    <property type="entry name" value="P-loop containing nucleoside triphosphate hydrolases"/>
    <property type="match status" value="1"/>
</dbReference>
<organism>
    <name type="scientific">Aeromonas hydrophila subsp. hydrophila (strain ATCC 7966 / DSM 30187 / BCRC 13018 / CCUG 14551 / JCM 1027 / KCTC 2358 / NCIMB 9240 / NCTC 8049)</name>
    <dbReference type="NCBI Taxonomy" id="380703"/>
    <lineage>
        <taxon>Bacteria</taxon>
        <taxon>Pseudomonadati</taxon>
        <taxon>Pseudomonadota</taxon>
        <taxon>Gammaproteobacteria</taxon>
        <taxon>Aeromonadales</taxon>
        <taxon>Aeromonadaceae</taxon>
        <taxon>Aeromonas</taxon>
    </lineage>
</organism>
<accession>A0KQ08</accession>
<reference key="1">
    <citation type="journal article" date="2006" name="J. Bacteriol.">
        <title>Genome sequence of Aeromonas hydrophila ATCC 7966T: jack of all trades.</title>
        <authorList>
            <person name="Seshadri R."/>
            <person name="Joseph S.W."/>
            <person name="Chopra A.K."/>
            <person name="Sha J."/>
            <person name="Shaw J."/>
            <person name="Graf J."/>
            <person name="Haft D.H."/>
            <person name="Wu M."/>
            <person name="Ren Q."/>
            <person name="Rosovitz M.J."/>
            <person name="Madupu R."/>
            <person name="Tallon L."/>
            <person name="Kim M."/>
            <person name="Jin S."/>
            <person name="Vuong H."/>
            <person name="Stine O.C."/>
            <person name="Ali A."/>
            <person name="Horneman A.J."/>
            <person name="Heidelberg J.F."/>
        </authorList>
    </citation>
    <scope>NUCLEOTIDE SEQUENCE [LARGE SCALE GENOMIC DNA]</scope>
    <source>
        <strain>ATCC 7966 / DSM 30187 / BCRC 13018 / CCUG 14551 / JCM 1027 / KCTC 2358 / NCIMB 9240 / NCTC 8049</strain>
    </source>
</reference>
<evidence type="ECO:0000255" key="1">
    <source>
        <dbReference type="HAMAP-Rule" id="MF_00636"/>
    </source>
</evidence>
<gene>
    <name type="ordered locus">AHA_3920</name>
</gene>
<protein>
    <recommendedName>
        <fullName evidence="1">Nucleotide-binding protein AHA_3920</fullName>
    </recommendedName>
</protein>
<feature type="chain" id="PRO_1000056802" description="Nucleotide-binding protein AHA_3920">
    <location>
        <begin position="1"/>
        <end position="288"/>
    </location>
</feature>
<feature type="binding site" evidence="1">
    <location>
        <begin position="8"/>
        <end position="15"/>
    </location>
    <ligand>
        <name>ATP</name>
        <dbReference type="ChEBI" id="CHEBI:30616"/>
    </ligand>
</feature>
<feature type="binding site" evidence="1">
    <location>
        <begin position="56"/>
        <end position="59"/>
    </location>
    <ligand>
        <name>GTP</name>
        <dbReference type="ChEBI" id="CHEBI:37565"/>
    </ligand>
</feature>